<name>PGK_STRZP</name>
<reference key="1">
    <citation type="journal article" date="2010" name="Genome Biol.">
        <title>Structure and dynamics of the pan-genome of Streptococcus pneumoniae and closely related species.</title>
        <authorList>
            <person name="Donati C."/>
            <person name="Hiller N.L."/>
            <person name="Tettelin H."/>
            <person name="Muzzi A."/>
            <person name="Croucher N.J."/>
            <person name="Angiuoli S.V."/>
            <person name="Oggioni M."/>
            <person name="Dunning Hotopp J.C."/>
            <person name="Hu F.Z."/>
            <person name="Riley D.R."/>
            <person name="Covacci A."/>
            <person name="Mitchell T.J."/>
            <person name="Bentley S.D."/>
            <person name="Kilian M."/>
            <person name="Ehrlich G.D."/>
            <person name="Rappuoli R."/>
            <person name="Moxon E.R."/>
            <person name="Masignani V."/>
        </authorList>
    </citation>
    <scope>NUCLEOTIDE SEQUENCE [LARGE SCALE GENOMIC DNA]</scope>
    <source>
        <strain>P1031</strain>
    </source>
</reference>
<accession>C1CIZ1</accession>
<gene>
    <name evidence="1" type="primary">pgk</name>
    <name type="ordered locus">SPP_0521</name>
</gene>
<comment type="catalytic activity">
    <reaction evidence="1">
        <text>(2R)-3-phosphoglycerate + ATP = (2R)-3-phospho-glyceroyl phosphate + ADP</text>
        <dbReference type="Rhea" id="RHEA:14801"/>
        <dbReference type="ChEBI" id="CHEBI:30616"/>
        <dbReference type="ChEBI" id="CHEBI:57604"/>
        <dbReference type="ChEBI" id="CHEBI:58272"/>
        <dbReference type="ChEBI" id="CHEBI:456216"/>
        <dbReference type="EC" id="2.7.2.3"/>
    </reaction>
</comment>
<comment type="pathway">
    <text evidence="1">Carbohydrate degradation; glycolysis; pyruvate from D-glyceraldehyde 3-phosphate: step 2/5.</text>
</comment>
<comment type="subunit">
    <text evidence="1">Monomer.</text>
</comment>
<comment type="subcellular location">
    <subcellularLocation>
        <location evidence="1">Cytoplasm</location>
    </subcellularLocation>
</comment>
<comment type="similarity">
    <text evidence="1">Belongs to the phosphoglycerate kinase family.</text>
</comment>
<evidence type="ECO:0000255" key="1">
    <source>
        <dbReference type="HAMAP-Rule" id="MF_00145"/>
    </source>
</evidence>
<protein>
    <recommendedName>
        <fullName evidence="1">Phosphoglycerate kinase</fullName>
        <ecNumber evidence="1">2.7.2.3</ecNumber>
    </recommendedName>
</protein>
<organism>
    <name type="scientific">Streptococcus pneumoniae (strain P1031)</name>
    <dbReference type="NCBI Taxonomy" id="488223"/>
    <lineage>
        <taxon>Bacteria</taxon>
        <taxon>Bacillati</taxon>
        <taxon>Bacillota</taxon>
        <taxon>Bacilli</taxon>
        <taxon>Lactobacillales</taxon>
        <taxon>Streptococcaceae</taxon>
        <taxon>Streptococcus</taxon>
    </lineage>
</organism>
<dbReference type="EC" id="2.7.2.3" evidence="1"/>
<dbReference type="EMBL" id="CP000920">
    <property type="protein sequence ID" value="ACO21550.1"/>
    <property type="molecule type" value="Genomic_DNA"/>
</dbReference>
<dbReference type="RefSeq" id="WP_001096743.1">
    <property type="nucleotide sequence ID" value="NC_012467.1"/>
</dbReference>
<dbReference type="SMR" id="C1CIZ1"/>
<dbReference type="KEGG" id="spp:SPP_0521"/>
<dbReference type="HOGENOM" id="CLU_025427_0_1_9"/>
<dbReference type="UniPathway" id="UPA00109">
    <property type="reaction ID" value="UER00185"/>
</dbReference>
<dbReference type="GO" id="GO:0005829">
    <property type="term" value="C:cytosol"/>
    <property type="evidence" value="ECO:0007669"/>
    <property type="project" value="TreeGrafter"/>
</dbReference>
<dbReference type="GO" id="GO:0043531">
    <property type="term" value="F:ADP binding"/>
    <property type="evidence" value="ECO:0007669"/>
    <property type="project" value="TreeGrafter"/>
</dbReference>
<dbReference type="GO" id="GO:0005524">
    <property type="term" value="F:ATP binding"/>
    <property type="evidence" value="ECO:0007669"/>
    <property type="project" value="UniProtKB-KW"/>
</dbReference>
<dbReference type="GO" id="GO:0004618">
    <property type="term" value="F:phosphoglycerate kinase activity"/>
    <property type="evidence" value="ECO:0007669"/>
    <property type="project" value="UniProtKB-UniRule"/>
</dbReference>
<dbReference type="GO" id="GO:0006094">
    <property type="term" value="P:gluconeogenesis"/>
    <property type="evidence" value="ECO:0007669"/>
    <property type="project" value="TreeGrafter"/>
</dbReference>
<dbReference type="GO" id="GO:0006096">
    <property type="term" value="P:glycolytic process"/>
    <property type="evidence" value="ECO:0007669"/>
    <property type="project" value="UniProtKB-UniRule"/>
</dbReference>
<dbReference type="FunFam" id="3.40.50.1260:FF:000001">
    <property type="entry name" value="Phosphoglycerate kinase"/>
    <property type="match status" value="1"/>
</dbReference>
<dbReference type="FunFam" id="3.40.50.1260:FF:000008">
    <property type="entry name" value="Phosphoglycerate kinase"/>
    <property type="match status" value="1"/>
</dbReference>
<dbReference type="Gene3D" id="3.40.50.1260">
    <property type="entry name" value="Phosphoglycerate kinase, N-terminal domain"/>
    <property type="match status" value="2"/>
</dbReference>
<dbReference type="HAMAP" id="MF_00145">
    <property type="entry name" value="Phosphoglyc_kinase"/>
    <property type="match status" value="1"/>
</dbReference>
<dbReference type="InterPro" id="IPR001576">
    <property type="entry name" value="Phosphoglycerate_kinase"/>
</dbReference>
<dbReference type="InterPro" id="IPR015911">
    <property type="entry name" value="Phosphoglycerate_kinase_CS"/>
</dbReference>
<dbReference type="InterPro" id="IPR015824">
    <property type="entry name" value="Phosphoglycerate_kinase_N"/>
</dbReference>
<dbReference type="InterPro" id="IPR036043">
    <property type="entry name" value="Phosphoglycerate_kinase_sf"/>
</dbReference>
<dbReference type="PANTHER" id="PTHR11406">
    <property type="entry name" value="PHOSPHOGLYCERATE KINASE"/>
    <property type="match status" value="1"/>
</dbReference>
<dbReference type="PANTHER" id="PTHR11406:SF23">
    <property type="entry name" value="PHOSPHOGLYCERATE KINASE 1, CHLOROPLASTIC-RELATED"/>
    <property type="match status" value="1"/>
</dbReference>
<dbReference type="Pfam" id="PF00162">
    <property type="entry name" value="PGK"/>
    <property type="match status" value="1"/>
</dbReference>
<dbReference type="PIRSF" id="PIRSF000724">
    <property type="entry name" value="Pgk"/>
    <property type="match status" value="1"/>
</dbReference>
<dbReference type="PRINTS" id="PR00477">
    <property type="entry name" value="PHGLYCKINASE"/>
</dbReference>
<dbReference type="SUPFAM" id="SSF53748">
    <property type="entry name" value="Phosphoglycerate kinase"/>
    <property type="match status" value="1"/>
</dbReference>
<dbReference type="PROSITE" id="PS00111">
    <property type="entry name" value="PGLYCERATE_KINASE"/>
    <property type="match status" value="1"/>
</dbReference>
<keyword id="KW-0067">ATP-binding</keyword>
<keyword id="KW-0963">Cytoplasm</keyword>
<keyword id="KW-0324">Glycolysis</keyword>
<keyword id="KW-0418">Kinase</keyword>
<keyword id="KW-0547">Nucleotide-binding</keyword>
<keyword id="KW-0808">Transferase</keyword>
<proteinExistence type="inferred from homology"/>
<sequence>MAKLTVKDVDLKGKKVLVRVDFNVPLKDGVITNDNRITAALPTIKYIIEQGGRAILFSHLGRVKEEADKAGKSLAPVAADLAAKLGQDVVFPGVTRGAELEAAINALEDGQVLLVENTRYEDVDGKKESKNDPELGKYWASLGDGIFVNDAFGTAHRAHASNVGISANVEKAVAGFLLENEIAYIQEAVETPERPFVAILGGSKVSDKIGVIENLLEKADKVLIGGGMTYTFYKAQGIEIGNSLVEEDKLDVAKALLEKANGKLILPVDSKEANAFAGYTEVRDTEGEAVSEGFLGLDIGPKSIAKFDEALTGAKTVVWNGPMGVFENPDFQAGTIGVMDAIVKQPGVKSIIGGGDSAAAAINLGRADKFSWISTGGGASMELLEGKVLPGLAALTEK</sequence>
<feature type="chain" id="PRO_1000192854" description="Phosphoglycerate kinase">
    <location>
        <begin position="1"/>
        <end position="398"/>
    </location>
</feature>
<feature type="binding site" evidence="1">
    <location>
        <begin position="21"/>
        <end position="23"/>
    </location>
    <ligand>
        <name>substrate</name>
    </ligand>
</feature>
<feature type="binding site" evidence="1">
    <location>
        <position position="36"/>
    </location>
    <ligand>
        <name>substrate</name>
    </ligand>
</feature>
<feature type="binding site" evidence="1">
    <location>
        <begin position="59"/>
        <end position="62"/>
    </location>
    <ligand>
        <name>substrate</name>
    </ligand>
</feature>
<feature type="binding site" evidence="1">
    <location>
        <position position="119"/>
    </location>
    <ligand>
        <name>substrate</name>
    </ligand>
</feature>
<feature type="binding site" evidence="1">
    <location>
        <position position="157"/>
    </location>
    <ligand>
        <name>substrate</name>
    </ligand>
</feature>
<feature type="binding site" evidence="1">
    <location>
        <position position="208"/>
    </location>
    <ligand>
        <name>ATP</name>
        <dbReference type="ChEBI" id="CHEBI:30616"/>
    </ligand>
</feature>
<feature type="binding site" evidence="1">
    <location>
        <position position="296"/>
    </location>
    <ligand>
        <name>ATP</name>
        <dbReference type="ChEBI" id="CHEBI:30616"/>
    </ligand>
</feature>
<feature type="binding site" evidence="1">
    <location>
        <position position="327"/>
    </location>
    <ligand>
        <name>ATP</name>
        <dbReference type="ChEBI" id="CHEBI:30616"/>
    </ligand>
</feature>
<feature type="binding site" evidence="1">
    <location>
        <begin position="354"/>
        <end position="357"/>
    </location>
    <ligand>
        <name>ATP</name>
        <dbReference type="ChEBI" id="CHEBI:30616"/>
    </ligand>
</feature>